<feature type="chain" id="PRO_0000110297" description="NAD-dependent protein deacetylase">
    <location>
        <begin position="1"/>
        <end position="274"/>
    </location>
</feature>
<feature type="domain" description="Deacetylase sirtuin-type" evidence="2">
    <location>
        <begin position="1"/>
        <end position="274"/>
    </location>
</feature>
<feature type="active site" description="Proton acceptor" evidence="2">
    <location>
        <position position="122"/>
    </location>
</feature>
<feature type="binding site" evidence="1">
    <location>
        <begin position="26"/>
        <end position="46"/>
    </location>
    <ligand>
        <name>NAD(+)</name>
        <dbReference type="ChEBI" id="CHEBI:57540"/>
    </ligand>
</feature>
<feature type="binding site" evidence="1">
    <location>
        <begin position="104"/>
        <end position="107"/>
    </location>
    <ligand>
        <name>NAD(+)</name>
        <dbReference type="ChEBI" id="CHEBI:57540"/>
    </ligand>
</feature>
<feature type="binding site" evidence="1">
    <location>
        <position position="130"/>
    </location>
    <ligand>
        <name>Zn(2+)</name>
        <dbReference type="ChEBI" id="CHEBI:29105"/>
    </ligand>
</feature>
<feature type="binding site" evidence="1">
    <location>
        <position position="133"/>
    </location>
    <ligand>
        <name>Zn(2+)</name>
        <dbReference type="ChEBI" id="CHEBI:29105"/>
    </ligand>
</feature>
<feature type="binding site" evidence="1">
    <location>
        <position position="181"/>
    </location>
    <ligand>
        <name>Zn(2+)</name>
        <dbReference type="ChEBI" id="CHEBI:29105"/>
    </ligand>
</feature>
<feature type="binding site" evidence="1">
    <location>
        <position position="184"/>
    </location>
    <ligand>
        <name>Zn(2+)</name>
        <dbReference type="ChEBI" id="CHEBI:29105"/>
    </ligand>
</feature>
<feature type="binding site" evidence="1">
    <location>
        <begin position="221"/>
        <end position="223"/>
    </location>
    <ligand>
        <name>NAD(+)</name>
        <dbReference type="ChEBI" id="CHEBI:57540"/>
    </ligand>
</feature>
<feature type="binding site" evidence="1">
    <location>
        <begin position="247"/>
        <end position="249"/>
    </location>
    <ligand>
        <name>NAD(+)</name>
        <dbReference type="ChEBI" id="CHEBI:57540"/>
    </ligand>
</feature>
<feature type="binding site" evidence="1">
    <location>
        <position position="265"/>
    </location>
    <ligand>
        <name>NAD(+)</name>
        <dbReference type="ChEBI" id="CHEBI:57540"/>
    </ligand>
</feature>
<dbReference type="EC" id="2.3.1.286" evidence="1 2"/>
<dbReference type="EMBL" id="BX640442">
    <property type="protein sequence ID" value="CAE32301.1"/>
    <property type="molecule type" value="Genomic_DNA"/>
</dbReference>
<dbReference type="RefSeq" id="WP_003810130.1">
    <property type="nucleotide sequence ID" value="NC_002927.3"/>
</dbReference>
<dbReference type="SMR" id="Q7WLE5"/>
<dbReference type="KEGG" id="bbr:BB1804"/>
<dbReference type="eggNOG" id="COG0846">
    <property type="taxonomic scope" value="Bacteria"/>
</dbReference>
<dbReference type="HOGENOM" id="CLU_023643_3_2_4"/>
<dbReference type="Proteomes" id="UP000001027">
    <property type="component" value="Chromosome"/>
</dbReference>
<dbReference type="GO" id="GO:0005737">
    <property type="term" value="C:cytoplasm"/>
    <property type="evidence" value="ECO:0007669"/>
    <property type="project" value="UniProtKB-SubCell"/>
</dbReference>
<dbReference type="GO" id="GO:0017136">
    <property type="term" value="F:histone deacetylase activity, NAD-dependent"/>
    <property type="evidence" value="ECO:0007669"/>
    <property type="project" value="TreeGrafter"/>
</dbReference>
<dbReference type="GO" id="GO:0070403">
    <property type="term" value="F:NAD+ binding"/>
    <property type="evidence" value="ECO:0007669"/>
    <property type="project" value="UniProtKB-UniRule"/>
</dbReference>
<dbReference type="GO" id="GO:0008270">
    <property type="term" value="F:zinc ion binding"/>
    <property type="evidence" value="ECO:0007669"/>
    <property type="project" value="UniProtKB-UniRule"/>
</dbReference>
<dbReference type="Gene3D" id="3.30.1600.10">
    <property type="entry name" value="SIR2/SIRT2 'Small Domain"/>
    <property type="match status" value="1"/>
</dbReference>
<dbReference type="Gene3D" id="3.40.50.1220">
    <property type="entry name" value="TPP-binding domain"/>
    <property type="match status" value="1"/>
</dbReference>
<dbReference type="HAMAP" id="MF_01967">
    <property type="entry name" value="Sirtuin_ClassII"/>
    <property type="match status" value="1"/>
</dbReference>
<dbReference type="InterPro" id="IPR029035">
    <property type="entry name" value="DHS-like_NAD/FAD-binding_dom"/>
</dbReference>
<dbReference type="InterPro" id="IPR050134">
    <property type="entry name" value="NAD-dep_sirtuin_deacylases"/>
</dbReference>
<dbReference type="InterPro" id="IPR003000">
    <property type="entry name" value="Sirtuin"/>
</dbReference>
<dbReference type="InterPro" id="IPR026591">
    <property type="entry name" value="Sirtuin_cat_small_dom_sf"/>
</dbReference>
<dbReference type="InterPro" id="IPR026587">
    <property type="entry name" value="Sirtuin_class_II"/>
</dbReference>
<dbReference type="InterPro" id="IPR026590">
    <property type="entry name" value="Ssirtuin_cat_dom"/>
</dbReference>
<dbReference type="NCBIfam" id="NF003738">
    <property type="entry name" value="PRK05333.1"/>
    <property type="match status" value="1"/>
</dbReference>
<dbReference type="PANTHER" id="PTHR11085">
    <property type="entry name" value="NAD-DEPENDENT PROTEIN DEACYLASE SIRTUIN-5, MITOCHONDRIAL-RELATED"/>
    <property type="match status" value="1"/>
</dbReference>
<dbReference type="PANTHER" id="PTHR11085:SF10">
    <property type="entry name" value="NAD-DEPENDENT PROTEIN DEACYLASE SIRTUIN-5, MITOCHONDRIAL-RELATED"/>
    <property type="match status" value="1"/>
</dbReference>
<dbReference type="Pfam" id="PF02146">
    <property type="entry name" value="SIR2"/>
    <property type="match status" value="1"/>
</dbReference>
<dbReference type="SUPFAM" id="SSF52467">
    <property type="entry name" value="DHS-like NAD/FAD-binding domain"/>
    <property type="match status" value="1"/>
</dbReference>
<dbReference type="PROSITE" id="PS50305">
    <property type="entry name" value="SIRTUIN"/>
    <property type="match status" value="1"/>
</dbReference>
<accession>Q7WLE5</accession>
<keyword id="KW-0963">Cytoplasm</keyword>
<keyword id="KW-0479">Metal-binding</keyword>
<keyword id="KW-0520">NAD</keyword>
<keyword id="KW-0808">Transferase</keyword>
<keyword id="KW-0862">Zinc</keyword>
<protein>
    <recommendedName>
        <fullName evidence="1">NAD-dependent protein deacetylase</fullName>
        <ecNumber evidence="1 2">2.3.1.286</ecNumber>
    </recommendedName>
    <alternativeName>
        <fullName evidence="1">Regulatory protein SIR2 homolog</fullName>
    </alternativeName>
</protein>
<comment type="function">
    <text evidence="1">NAD-dependent protein deacetylase which modulates the activities of several enzymes which are inactive in their acetylated form.</text>
</comment>
<comment type="catalytic activity">
    <reaction evidence="1">
        <text>N(6)-acetyl-L-lysyl-[protein] + NAD(+) + H2O = 2''-O-acetyl-ADP-D-ribose + nicotinamide + L-lysyl-[protein]</text>
        <dbReference type="Rhea" id="RHEA:43636"/>
        <dbReference type="Rhea" id="RHEA-COMP:9752"/>
        <dbReference type="Rhea" id="RHEA-COMP:10731"/>
        <dbReference type="ChEBI" id="CHEBI:15377"/>
        <dbReference type="ChEBI" id="CHEBI:17154"/>
        <dbReference type="ChEBI" id="CHEBI:29969"/>
        <dbReference type="ChEBI" id="CHEBI:57540"/>
        <dbReference type="ChEBI" id="CHEBI:61930"/>
        <dbReference type="ChEBI" id="CHEBI:83767"/>
        <dbReference type="EC" id="2.3.1.286"/>
    </reaction>
</comment>
<comment type="cofactor">
    <cofactor evidence="1">
        <name>Zn(2+)</name>
        <dbReference type="ChEBI" id="CHEBI:29105"/>
    </cofactor>
    <text evidence="1">Binds 1 zinc ion per subunit.</text>
</comment>
<comment type="subcellular location">
    <subcellularLocation>
        <location evidence="1">Cytoplasm</location>
    </subcellularLocation>
</comment>
<comment type="similarity">
    <text evidence="1">Belongs to the sirtuin family. Class II subfamily.</text>
</comment>
<organism>
    <name type="scientific">Bordetella bronchiseptica (strain ATCC BAA-588 / NCTC 13252 / RB50)</name>
    <name type="common">Alcaligenes bronchisepticus</name>
    <dbReference type="NCBI Taxonomy" id="257310"/>
    <lineage>
        <taxon>Bacteria</taxon>
        <taxon>Pseudomonadati</taxon>
        <taxon>Pseudomonadota</taxon>
        <taxon>Betaproteobacteria</taxon>
        <taxon>Burkholderiales</taxon>
        <taxon>Alcaligenaceae</taxon>
        <taxon>Bordetella</taxon>
    </lineage>
</organism>
<gene>
    <name evidence="1" type="primary">cobB</name>
    <name type="ordered locus">BB1804</name>
</gene>
<reference key="1">
    <citation type="journal article" date="2003" name="Nat. Genet.">
        <title>Comparative analysis of the genome sequences of Bordetella pertussis, Bordetella parapertussis and Bordetella bronchiseptica.</title>
        <authorList>
            <person name="Parkhill J."/>
            <person name="Sebaihia M."/>
            <person name="Preston A."/>
            <person name="Murphy L.D."/>
            <person name="Thomson N.R."/>
            <person name="Harris D.E."/>
            <person name="Holden M.T.G."/>
            <person name="Churcher C.M."/>
            <person name="Bentley S.D."/>
            <person name="Mungall K.L."/>
            <person name="Cerdeno-Tarraga A.-M."/>
            <person name="Temple L."/>
            <person name="James K.D."/>
            <person name="Harris B."/>
            <person name="Quail M.A."/>
            <person name="Achtman M."/>
            <person name="Atkin R."/>
            <person name="Baker S."/>
            <person name="Basham D."/>
            <person name="Bason N."/>
            <person name="Cherevach I."/>
            <person name="Chillingworth T."/>
            <person name="Collins M."/>
            <person name="Cronin A."/>
            <person name="Davis P."/>
            <person name="Doggett J."/>
            <person name="Feltwell T."/>
            <person name="Goble A."/>
            <person name="Hamlin N."/>
            <person name="Hauser H."/>
            <person name="Holroyd S."/>
            <person name="Jagels K."/>
            <person name="Leather S."/>
            <person name="Moule S."/>
            <person name="Norberczak H."/>
            <person name="O'Neil S."/>
            <person name="Ormond D."/>
            <person name="Price C."/>
            <person name="Rabbinowitsch E."/>
            <person name="Rutter S."/>
            <person name="Sanders M."/>
            <person name="Saunders D."/>
            <person name="Seeger K."/>
            <person name="Sharp S."/>
            <person name="Simmonds M."/>
            <person name="Skelton J."/>
            <person name="Squares R."/>
            <person name="Squares S."/>
            <person name="Stevens K."/>
            <person name="Unwin L."/>
            <person name="Whitehead S."/>
            <person name="Barrell B.G."/>
            <person name="Maskell D.J."/>
        </authorList>
    </citation>
    <scope>NUCLEOTIDE SEQUENCE [LARGE SCALE GENOMIC DNA]</scope>
    <source>
        <strain>ATCC BAA-588 / NCTC 13252 / RB50</strain>
    </source>
</reference>
<proteinExistence type="inferred from homology"/>
<sequence>MDSRMSDLQALRGFLGGSERLFVLTGAGCSTASGIPDYRDGQGQWKRKPPIDFQAFMGGQPARARYWARSMVGWRHFGQARPNAAHHALARLAQRGQVDLLVTQNVDRLHQAAGGREVLDLHGRLDEVRCMQCDWRGPRGPWQHTLELANPQWAALQAGAAPDGDADLEGQDFSRFVVPSCPRCGGIVKPDVVFFGETVPRERVQRAYAALEHADAVLVVGSSLMLYSGYRFVQAAARAGLPIAAINLGRTRADDMLALKVSRPCDEVLAEVVS</sequence>
<evidence type="ECO:0000255" key="1">
    <source>
        <dbReference type="HAMAP-Rule" id="MF_01967"/>
    </source>
</evidence>
<evidence type="ECO:0000255" key="2">
    <source>
        <dbReference type="PROSITE-ProRule" id="PRU00236"/>
    </source>
</evidence>
<name>NPD_BORBR</name>